<name>PB2_INCJH</name>
<dbReference type="EMBL" id="AF170576">
    <property type="protein sequence ID" value="AAF89739.2"/>
    <property type="molecule type" value="Genomic_RNA"/>
</dbReference>
<dbReference type="PDB" id="5D98">
    <property type="method" value="X-ray"/>
    <property type="resolution" value="3.90 A"/>
    <property type="chains" value="C/F=1-774"/>
</dbReference>
<dbReference type="PDB" id="5D9A">
    <property type="method" value="X-ray"/>
    <property type="resolution" value="4.30 A"/>
    <property type="chains" value="C/F/I/L=1-774"/>
</dbReference>
<dbReference type="PDB" id="6F5P">
    <property type="method" value="X-ray"/>
    <property type="resolution" value="4.14 A"/>
    <property type="chains" value="E/F=1-774"/>
</dbReference>
<dbReference type="PDB" id="6XZD">
    <property type="method" value="EM"/>
    <property type="resolution" value="3.40 A"/>
    <property type="chains" value="CP1/FP1=1-774"/>
</dbReference>
<dbReference type="PDB" id="6XZG">
    <property type="method" value="EM"/>
    <property type="resolution" value="3.80 A"/>
    <property type="chains" value="CP1/FP1=1-774"/>
</dbReference>
<dbReference type="PDB" id="6XZP">
    <property type="method" value="EM"/>
    <property type="resolution" value="3.30 A"/>
    <property type="chains" value="CP1/FP1=1-774"/>
</dbReference>
<dbReference type="PDB" id="6XZQ">
    <property type="method" value="EM"/>
    <property type="resolution" value="3.60 A"/>
    <property type="chains" value="C/F=1-774"/>
</dbReference>
<dbReference type="PDB" id="6XZR">
    <property type="method" value="EM"/>
    <property type="resolution" value="3.30 A"/>
    <property type="chains" value="CP1/FP1=1-774"/>
</dbReference>
<dbReference type="PDB" id="6Y0C">
    <property type="method" value="EM"/>
    <property type="resolution" value="3.20 A"/>
    <property type="chains" value="C=1-774"/>
</dbReference>
<dbReference type="PDBsum" id="5D98"/>
<dbReference type="PDBsum" id="5D9A"/>
<dbReference type="PDBsum" id="6F5P"/>
<dbReference type="PDBsum" id="6XZD"/>
<dbReference type="PDBsum" id="6XZG"/>
<dbReference type="PDBsum" id="6XZP"/>
<dbReference type="PDBsum" id="6XZQ"/>
<dbReference type="PDBsum" id="6XZR"/>
<dbReference type="PDBsum" id="6Y0C"/>
<dbReference type="EMDB" id="EMD-10659"/>
<dbReference type="EMDB" id="EMD-10662"/>
<dbReference type="EMDB" id="EMD-10664"/>
<dbReference type="EMDB" id="EMD-10665"/>
<dbReference type="EMDB" id="EMD-10666"/>
<dbReference type="EMDB" id="EMD-10667"/>
<dbReference type="SMR" id="Q9IMP3"/>
<dbReference type="DIP" id="DIP-61788N"/>
<dbReference type="IntAct" id="Q9IMP3">
    <property type="interactions" value="1"/>
</dbReference>
<dbReference type="EvolutionaryTrace" id="Q9IMP3"/>
<dbReference type="Proteomes" id="UP000138885">
    <property type="component" value="Genome"/>
</dbReference>
<dbReference type="GO" id="GO:0042025">
    <property type="term" value="C:host cell nucleus"/>
    <property type="evidence" value="ECO:0007669"/>
    <property type="project" value="UniProtKB-SubCell"/>
</dbReference>
<dbReference type="GO" id="GO:0044423">
    <property type="term" value="C:virion component"/>
    <property type="evidence" value="ECO:0007669"/>
    <property type="project" value="UniProtKB-UniRule"/>
</dbReference>
<dbReference type="GO" id="GO:0003723">
    <property type="term" value="F:RNA binding"/>
    <property type="evidence" value="ECO:0007669"/>
    <property type="project" value="UniProtKB-UniRule"/>
</dbReference>
<dbReference type="GO" id="GO:0003968">
    <property type="term" value="F:RNA-directed RNA polymerase activity"/>
    <property type="evidence" value="ECO:0007669"/>
    <property type="project" value="UniProtKB-UniRule"/>
</dbReference>
<dbReference type="GO" id="GO:0006370">
    <property type="term" value="P:7-methylguanosine mRNA capping"/>
    <property type="evidence" value="ECO:0007669"/>
    <property type="project" value="UniProtKB-UniRule"/>
</dbReference>
<dbReference type="GO" id="GO:0075526">
    <property type="term" value="P:cap snatching"/>
    <property type="evidence" value="ECO:0007669"/>
    <property type="project" value="UniProtKB-UniRule"/>
</dbReference>
<dbReference type="GO" id="GO:0006351">
    <property type="term" value="P:DNA-templated transcription"/>
    <property type="evidence" value="ECO:0007669"/>
    <property type="project" value="UniProtKB-UniRule"/>
</dbReference>
<dbReference type="GO" id="GO:0039657">
    <property type="term" value="P:symbiont-mediated suppression of host gene expression"/>
    <property type="evidence" value="ECO:0007669"/>
    <property type="project" value="UniProtKB-KW"/>
</dbReference>
<dbReference type="GO" id="GO:0039523">
    <property type="term" value="P:symbiont-mediated suppression of host mRNA transcription via inhibition of RNA polymerase II activity"/>
    <property type="evidence" value="ECO:0007669"/>
    <property type="project" value="UniProtKB-UniRule"/>
</dbReference>
<dbReference type="GO" id="GO:0039694">
    <property type="term" value="P:viral RNA genome replication"/>
    <property type="evidence" value="ECO:0007669"/>
    <property type="project" value="InterPro"/>
</dbReference>
<dbReference type="HAMAP" id="MF_04062">
    <property type="entry name" value="INV_PB2"/>
    <property type="match status" value="1"/>
</dbReference>
<dbReference type="InterPro" id="IPR049110">
    <property type="entry name" value="Flu_PB2_2nd"/>
</dbReference>
<dbReference type="InterPro" id="IPR049114">
    <property type="entry name" value="Flu_PB2_6th"/>
</dbReference>
<dbReference type="InterPro" id="IPR049115">
    <property type="entry name" value="Flu_PB2_C"/>
</dbReference>
<dbReference type="InterPro" id="IPR048298">
    <property type="entry name" value="Flu_PB2_CAP-bd"/>
</dbReference>
<dbReference type="InterPro" id="IPR049111">
    <property type="entry name" value="Flu_PB2_middle"/>
</dbReference>
<dbReference type="InterPro" id="IPR049106">
    <property type="entry name" value="Flu_PB2_N"/>
</dbReference>
<dbReference type="InterPro" id="IPR001591">
    <property type="entry name" value="INV_PB2"/>
</dbReference>
<dbReference type="InterPro" id="IPR049113">
    <property type="entry name" value="PB2_helical"/>
</dbReference>
<dbReference type="Pfam" id="PF20947">
    <property type="entry name" value="Flu_PB2_1st"/>
    <property type="match status" value="1"/>
</dbReference>
<dbReference type="Pfam" id="PF20948">
    <property type="entry name" value="Flu_PB2_2nd"/>
    <property type="match status" value="1"/>
</dbReference>
<dbReference type="Pfam" id="PF20949">
    <property type="entry name" value="Flu_PB2_3rd"/>
    <property type="match status" value="1"/>
</dbReference>
<dbReference type="Pfam" id="PF20950">
    <property type="entry name" value="Flu_PB2_4th"/>
    <property type="match status" value="1"/>
</dbReference>
<dbReference type="Pfam" id="PF00604">
    <property type="entry name" value="Flu_PB2_5th"/>
    <property type="match status" value="1"/>
</dbReference>
<dbReference type="Pfam" id="PF20951">
    <property type="entry name" value="Flu_PB2_6th"/>
    <property type="match status" value="1"/>
</dbReference>
<dbReference type="Pfam" id="PF20952">
    <property type="entry name" value="Flu_PB2_7th"/>
    <property type="match status" value="1"/>
</dbReference>
<keyword id="KW-0002">3D-structure</keyword>
<keyword id="KW-1157">Cap snatching</keyword>
<keyword id="KW-1262">Eukaryotic host gene expression shutoff by virus</keyword>
<keyword id="KW-1191">Eukaryotic host transcription shutoff by virus</keyword>
<keyword id="KW-1190">Host gene expression shutoff by virus</keyword>
<keyword id="KW-1048">Host nucleus</keyword>
<keyword id="KW-0945">Host-virus interaction</keyword>
<keyword id="KW-1104">Inhibition of host RNA polymerase II by virus</keyword>
<keyword id="KW-0506">mRNA capping</keyword>
<keyword id="KW-0507">mRNA processing</keyword>
<keyword id="KW-1195">Viral transcription</keyword>
<keyword id="KW-0946">Virion</keyword>
<organism>
    <name type="scientific">Influenza C virus (strain C/Johannesburg/1/1966)</name>
    <dbReference type="NCBI Taxonomy" id="100673"/>
    <lineage>
        <taxon>Viruses</taxon>
        <taxon>Riboviria</taxon>
        <taxon>Orthornavirae</taxon>
        <taxon>Negarnaviricota</taxon>
        <taxon>Polyploviricotina</taxon>
        <taxon>Insthoviricetes</taxon>
        <taxon>Articulavirales</taxon>
        <taxon>Orthomyxoviridae</taxon>
        <taxon>Gammainfluenzavirus</taxon>
        <taxon>Gammainfluenzavirus influenzae</taxon>
        <taxon>Influenza C virus</taxon>
    </lineage>
</organism>
<proteinExistence type="evidence at protein level"/>
<protein>
    <recommendedName>
        <fullName evidence="1">Polymerase basic protein 2</fullName>
    </recommendedName>
    <alternativeName>
        <fullName evidence="1">RNA-directed RNA polymerase subunit P3</fullName>
    </alternativeName>
</protein>
<sequence length="774" mass="87822">MSLLLTIAKEYKRLCQDAKAAQMMTVGTVSNYTTFKKWTTSRKEKNPSLRMRWAMSSKFPIIANKRMLEEAQIPKEHNNVALWEDTEDVSKRDHVLASASCINYWNFCGPCVNNSEVIKEVYKSRFGRLERRKEIMWKELRFTLVDRQRRRVDTQPVEQRLRTGEIKDLQMWTLFEDEAPLASKFILDNYGLVKEMRSKFANKPLNKEVVAHMLEKQFNPESRFLPVFGAIRPERMELIHALGGETWIQEANTAGISNVDQRKNDIRAVCRKVCLAANASIMNAKSKLVEYIKSTSMRIGETERKLEELILETDDVSPEVTLCKSALGGQLGKTLSFGPMLLKKISGSGVKVKDTVYIQGVRAVQFEYWSEQEEFYGEYKSATALFSRKERSLEWITIGGGINEDRKRLLAMCMIFCRDGDYFKDAPATITMADLSTKLGREIPYQYVMMNWIQKSEDNLEALLYSRGIVETNPGKMGSSMGIDGSKRAIKSLRAVTIQSGKIDMPESKEKIHLELSDNLEAFDSSGRIVATILDLPSDKKVTFQDVSFQHPDLAVLRDEKTAITKGYEALIKRLGTGDNDIPSLIAKKDYLSLYNLPEVKLMAPLIRPNRKGVYSRVARKLVSTQVTTGHYSLHELIKVLPFTYFAPKQGMFEGRLFFSNDSFVEPGVNNNVFSWSKADSSKIYCHGIAIRVPLVVGDEHMDTSLALLEGFSVCENDPRAPMVTRQDLIDVGFGQKVRLFVGQGSVRTFKRTASQRAASSDVNKNVKKIKMSN</sequence>
<comment type="function">
    <text evidence="1 2">Plays an essential role in transcription initiation and cap-stealing mechanism, in which cellular capped pre-mRNAs are used to generate primers for viral transcription. Recognizes and binds a wide range of cap structures of target pre-RNAs which are subsequently cleaved after 10-13 nucleotides by the viral protein PA. Plays a role in the initiation of the viral genome replication and modulates the activity of the ribonucleoprotein (RNP) complex.</text>
</comment>
<comment type="subunit">
    <text evidence="1 2">Influenza RNA polymerase is composed of three subunits: PB1, PB2 and PA. Interacts (via N-terminus) with PB1 (via C-terminus). Interacts with nucleoprotein NP (via N-terminus). Interacts with host ANP32A (via C-terminus); this interaction promotes viral RNA synthesis.</text>
</comment>
<comment type="subcellular location">
    <subcellularLocation>
        <location evidence="1">Virion</location>
    </subcellularLocation>
    <subcellularLocation>
        <location evidence="1">Host nucleus</location>
    </subcellularLocation>
</comment>
<comment type="similarity">
    <text evidence="1">Belongs to the influenza viruses PB2 family.</text>
</comment>
<feature type="chain" id="PRO_0000269902" description="Polymerase basic protein 2">
    <location>
        <begin position="1"/>
        <end position="774"/>
    </location>
</feature>
<reference key="1">
    <citation type="submission" date="2006-10" db="EMBL/GenBank/DDBJ databases">
        <authorList>
            <person name="Crescenzo-Chaigne B."/>
        </authorList>
    </citation>
    <scope>NUCLEOTIDE SEQUENCE [GENOMIC RNA]</scope>
</reference>
<reference key="2">
    <citation type="journal article" date="1999" name="Virology">
        <title>Comparative analysis of the ability of the polymerase complexes of influenza viruses type A, B and C to assemble into functional RNPs that allow expression and replication of heterotypic model RNA templates in vivo.</title>
        <authorList>
            <person name="Crescenzo-Chaigne B."/>
            <person name="Naffakh N."/>
            <person name="van der Werf S."/>
        </authorList>
    </citation>
    <scope>NUCLEOTIDE SEQUENCE [GENOMIC RNA] OF 2-774</scope>
</reference>
<reference key="3">
    <citation type="journal article" date="2020" name="Nature">
        <title>Host ANP32A mediates the assembly of the influenza virus replicase.</title>
        <authorList>
            <person name="Carrique L."/>
            <person name="Fan H."/>
            <person name="Walker A.P."/>
            <person name="Keown J.R."/>
            <person name="Sharps J."/>
            <person name="Staller E."/>
            <person name="Barclay W.S."/>
            <person name="Fodor E."/>
            <person name="Grimes J.M."/>
        </authorList>
    </citation>
    <scope>FUNCTION</scope>
    <scope>INTERACTION WITH HOST ANP32A</scope>
</reference>
<accession>Q9IMP3</accession>
<evidence type="ECO:0000255" key="1">
    <source>
        <dbReference type="HAMAP-Rule" id="MF_04062"/>
    </source>
</evidence>
<evidence type="ECO:0000269" key="2">
    <source>
    </source>
</evidence>
<organismHost>
    <name type="scientific">Homo sapiens</name>
    <name type="common">Human</name>
    <dbReference type="NCBI Taxonomy" id="9606"/>
</organismHost>
<organismHost>
    <name type="scientific">Sus scrofa</name>
    <name type="common">Pig</name>
    <dbReference type="NCBI Taxonomy" id="9823"/>
</organismHost>
<gene>
    <name evidence="1" type="primary">PB2</name>
</gene>